<proteinExistence type="predicted"/>
<accession>P37788</accession>
<keyword id="KW-1185">Reference proteome</keyword>
<name>Y2093_SHIFL</name>
<dbReference type="EMBL" id="X71970">
    <property type="protein sequence ID" value="CAA50778.1"/>
    <property type="molecule type" value="Genomic_DNA"/>
</dbReference>
<dbReference type="EMBL" id="AE005674">
    <property type="protein sequence ID" value="AAN43632.1"/>
    <property type="molecule type" value="Genomic_DNA"/>
</dbReference>
<dbReference type="EMBL" id="AE014073">
    <property type="protein sequence ID" value="AAP17461.1"/>
    <property type="molecule type" value="Genomic_DNA"/>
</dbReference>
<dbReference type="PIR" id="G36966">
    <property type="entry name" value="G36966"/>
</dbReference>
<dbReference type="RefSeq" id="NP_707925.1">
    <property type="nucleotide sequence ID" value="NC_004337.2"/>
</dbReference>
<dbReference type="RefSeq" id="WP_000055830.1">
    <property type="nucleotide sequence ID" value="NZ_WPGV01000030.1"/>
</dbReference>
<dbReference type="STRING" id="198214.SF2093"/>
<dbReference type="PaxDb" id="198214-SF2093"/>
<dbReference type="DNASU" id="1078517"/>
<dbReference type="GeneID" id="1025863"/>
<dbReference type="KEGG" id="sfl:SF2093"/>
<dbReference type="KEGG" id="sfx:S2215"/>
<dbReference type="PATRIC" id="fig|198214.7.peg.2503"/>
<dbReference type="HOGENOM" id="CLU_1276889_0_0_6"/>
<dbReference type="Proteomes" id="UP000001006">
    <property type="component" value="Chromosome"/>
</dbReference>
<dbReference type="Proteomes" id="UP000002673">
    <property type="component" value="Chromosome"/>
</dbReference>
<organism>
    <name type="scientific">Shigella flexneri</name>
    <dbReference type="NCBI Taxonomy" id="623"/>
    <lineage>
        <taxon>Bacteria</taxon>
        <taxon>Pseudomonadati</taxon>
        <taxon>Pseudomonadota</taxon>
        <taxon>Gammaproteobacteria</taxon>
        <taxon>Enterobacterales</taxon>
        <taxon>Enterobacteriaceae</taxon>
        <taxon>Shigella</taxon>
    </lineage>
</organism>
<feature type="chain" id="PRO_0000066079" description="Uncharacterized protein SF2093/S2215">
    <location>
        <begin position="1"/>
        <end position="199"/>
    </location>
</feature>
<protein>
    <recommendedName>
        <fullName>Uncharacterized protein SF2093/S2215</fullName>
    </recommendedName>
    <alternativeName>
        <fullName>ORF11X6</fullName>
    </alternativeName>
</protein>
<reference key="1">
    <citation type="journal article" date="1994" name="J. Bacteriol.">
        <title>Characterization of the rfc region of Shigella flexneri.</title>
        <authorList>
            <person name="Morona R."/>
            <person name="Mavris M."/>
            <person name="Fallarino A."/>
            <person name="Manning P.A."/>
        </authorList>
    </citation>
    <scope>NUCLEOTIDE SEQUENCE [GENOMIC DNA]</scope>
    <source>
        <strain>PE577 / Serotype 2a</strain>
    </source>
</reference>
<reference key="2">
    <citation type="journal article" date="2002" name="Nucleic Acids Res.">
        <title>Genome sequence of Shigella flexneri 2a: insights into pathogenicity through comparison with genomes of Escherichia coli K12 and O157.</title>
        <authorList>
            <person name="Jin Q."/>
            <person name="Yuan Z."/>
            <person name="Xu J."/>
            <person name="Wang Y."/>
            <person name="Shen Y."/>
            <person name="Lu W."/>
            <person name="Wang J."/>
            <person name="Liu H."/>
            <person name="Yang J."/>
            <person name="Yang F."/>
            <person name="Zhang X."/>
            <person name="Zhang J."/>
            <person name="Yang G."/>
            <person name="Wu H."/>
            <person name="Qu D."/>
            <person name="Dong J."/>
            <person name="Sun L."/>
            <person name="Xue Y."/>
            <person name="Zhao A."/>
            <person name="Gao Y."/>
            <person name="Zhu J."/>
            <person name="Kan B."/>
            <person name="Ding K."/>
            <person name="Chen S."/>
            <person name="Cheng H."/>
            <person name="Yao Z."/>
            <person name="He B."/>
            <person name="Chen R."/>
            <person name="Ma D."/>
            <person name="Qiang B."/>
            <person name="Wen Y."/>
            <person name="Hou Y."/>
            <person name="Yu J."/>
        </authorList>
    </citation>
    <scope>NUCLEOTIDE SEQUENCE [LARGE SCALE GENOMIC DNA]</scope>
    <source>
        <strain>301 / Serotype 2a</strain>
    </source>
</reference>
<reference key="3">
    <citation type="journal article" date="2003" name="Infect. Immun.">
        <title>Complete genome sequence and comparative genomics of Shigella flexneri serotype 2a strain 2457T.</title>
        <authorList>
            <person name="Wei J."/>
            <person name="Goldberg M.B."/>
            <person name="Burland V."/>
            <person name="Venkatesan M.M."/>
            <person name="Deng W."/>
            <person name="Fournier G."/>
            <person name="Mayhew G.F."/>
            <person name="Plunkett G. III"/>
            <person name="Rose D.J."/>
            <person name="Darling A."/>
            <person name="Mau B."/>
            <person name="Perna N.T."/>
            <person name="Payne S.M."/>
            <person name="Runyen-Janecky L.J."/>
            <person name="Zhou S."/>
            <person name="Schwartz D.C."/>
            <person name="Blattner F.R."/>
        </authorList>
    </citation>
    <scope>NUCLEOTIDE SEQUENCE [LARGE SCALE GENOMIC DNA]</scope>
    <source>
        <strain>ATCC 700930 / 2457T / Serotype 2a</strain>
    </source>
</reference>
<sequence length="199" mass="22892">MSLNILIIYFLGMVGQFNKIAIFLIFTVCWVLSIIKRQQFRWLAINNIEFSTLFVILFLVLIFVVTLLSSLRAPGDWDDTMYHLPLARSLVEHHAIVVEQYLRFPLFPQNADLLMALGLQLGDVRLAQFLANICFFVIACGLVGCSWEITKTYYPGIIATILLFTINPLKDHLGYAYIDLTLSLFCCSQYSYIYSLRKQ</sequence>
<gene>
    <name type="ordered locus">SF2093</name>
    <name type="ordered locus">S2215</name>
</gene>